<geneLocation type="plasmid">
    <name>pFK99</name>
</geneLocation>
<gene>
    <name type="primary">fanB</name>
</gene>
<organism>
    <name type="scientific">Escherichia coli</name>
    <dbReference type="NCBI Taxonomy" id="562"/>
    <lineage>
        <taxon>Bacteria</taxon>
        <taxon>Pseudomonadati</taxon>
        <taxon>Pseudomonadota</taxon>
        <taxon>Gammaproteobacteria</taxon>
        <taxon>Enterobacterales</taxon>
        <taxon>Enterobacteriaceae</taxon>
        <taxon>Escherichia</taxon>
    </lineage>
</organism>
<keyword id="KW-1029">Fimbrium biogenesis</keyword>
<keyword id="KW-0614">Plasmid</keyword>
<keyword id="KW-0804">Transcription</keyword>
<keyword id="KW-0805">Transcription regulation</keyword>
<accession>P07105</accession>
<comment type="function">
    <text>Trans-acting protein involved in the regulation of the biogenesis of K99 fimbriae (FanC).</text>
</comment>
<proteinExistence type="predicted"/>
<sequence length="99" mass="11744">MYIDNYLIMRKINMEETILSLTSYQLRPGKVDKKQFVLLIDVSSIRSYKVINALEDYFVNGKNRKEICDNHKINQGYLSLKIRELQDISLRIYNISHCI</sequence>
<dbReference type="EMBL" id="X05797">
    <property type="protein sequence ID" value="CAA29239.1"/>
    <property type="molecule type" value="Genomic_DNA"/>
</dbReference>
<dbReference type="PIR" id="B29112">
    <property type="entry name" value="BVECFB"/>
</dbReference>
<dbReference type="RefSeq" id="WP_000275057.1">
    <property type="nucleotide sequence ID" value="NZ_CAXHTP010000002.1"/>
</dbReference>
<dbReference type="SMR" id="P07105"/>
<dbReference type="GO" id="GO:0006355">
    <property type="term" value="P:regulation of DNA-templated transcription"/>
    <property type="evidence" value="ECO:0007669"/>
    <property type="project" value="InterPro"/>
</dbReference>
<dbReference type="Gene3D" id="1.10.10.2690">
    <property type="match status" value="1"/>
</dbReference>
<dbReference type="InterPro" id="IPR004356">
    <property type="entry name" value="Adhesin_operon_reg_prot"/>
</dbReference>
<dbReference type="InterPro" id="IPR053721">
    <property type="entry name" value="Fimbrial_Adhesin_Reg"/>
</dbReference>
<dbReference type="Pfam" id="PF03333">
    <property type="entry name" value="PapB"/>
    <property type="match status" value="1"/>
</dbReference>
<dbReference type="PRINTS" id="PR01554">
    <property type="entry name" value="FIMREGULATRY"/>
</dbReference>
<name>FANB_ECOLX</name>
<reference key="1">
    <citation type="journal article" date="1987" name="Nucleic Acids Res.">
        <title>Two novel genes, fanA and fanB, involved in the biogenesis of K99 fimbriae.</title>
        <authorList>
            <person name="Roosendaal E."/>
            <person name="Boots M."/>
            <person name="de Graaf F.K."/>
        </authorList>
    </citation>
    <scope>NUCLEOTIDE SEQUENCE [GENOMIC DNA]</scope>
</reference>
<feature type="chain" id="PRO_0000087178" description="Regulatory protein FanB">
    <location>
        <begin position="1"/>
        <end position="99"/>
    </location>
</feature>
<protein>
    <recommendedName>
        <fullName>Regulatory protein FanB</fullName>
    </recommendedName>
    <alternativeName>
        <fullName>Fimbrial adhesin K99 B protein</fullName>
    </alternativeName>
</protein>